<proteinExistence type="inferred from homology"/>
<reference key="1">
    <citation type="journal article" date="2003" name="Proc. Natl. Acad. Sci. U.S.A.">
        <title>The complete genome sequence of Mycobacterium bovis.</title>
        <authorList>
            <person name="Garnier T."/>
            <person name="Eiglmeier K."/>
            <person name="Camus J.-C."/>
            <person name="Medina N."/>
            <person name="Mansoor H."/>
            <person name="Pryor M."/>
            <person name="Duthoy S."/>
            <person name="Grondin S."/>
            <person name="Lacroix C."/>
            <person name="Monsempe C."/>
            <person name="Simon S."/>
            <person name="Harris B."/>
            <person name="Atkin R."/>
            <person name="Doggett J."/>
            <person name="Mayes R."/>
            <person name="Keating L."/>
            <person name="Wheeler P.R."/>
            <person name="Parkhill J."/>
            <person name="Barrell B.G."/>
            <person name="Cole S.T."/>
            <person name="Gordon S.V."/>
            <person name="Hewinson R.G."/>
        </authorList>
    </citation>
    <scope>NUCLEOTIDE SEQUENCE [LARGE SCALE GENOMIC DNA]</scope>
    <source>
        <strain>ATCC BAA-935 / AF2122/97</strain>
    </source>
</reference>
<reference key="2">
    <citation type="journal article" date="2017" name="Genome Announc.">
        <title>Updated reference genome sequence and annotation of Mycobacterium bovis AF2122/97.</title>
        <authorList>
            <person name="Malone K.M."/>
            <person name="Farrell D."/>
            <person name="Stuber T.P."/>
            <person name="Schubert O.T."/>
            <person name="Aebersold R."/>
            <person name="Robbe-Austerman S."/>
            <person name="Gordon S.V."/>
        </authorList>
    </citation>
    <scope>NUCLEOTIDE SEQUENCE [LARGE SCALE GENOMIC DNA]</scope>
    <scope>GENOME REANNOTATION</scope>
    <source>
        <strain>ATCC BAA-935 / AF2122/97</strain>
    </source>
</reference>
<name>KPRS_MYCBO</name>
<dbReference type="EC" id="2.7.6.1" evidence="1"/>
<dbReference type="EMBL" id="LT708304">
    <property type="protein sequence ID" value="SIT99644.1"/>
    <property type="molecule type" value="Genomic_DNA"/>
</dbReference>
<dbReference type="RefSeq" id="NP_854701.1">
    <property type="nucleotide sequence ID" value="NC_002945.3"/>
</dbReference>
<dbReference type="RefSeq" id="WP_003405263.1">
    <property type="nucleotide sequence ID" value="NC_002945.4"/>
</dbReference>
<dbReference type="SMR" id="P65233"/>
<dbReference type="KEGG" id="mbo:BQ2027_MB1045C"/>
<dbReference type="PATRIC" id="fig|233413.5.peg.1136"/>
<dbReference type="UniPathway" id="UPA00087">
    <property type="reaction ID" value="UER00172"/>
</dbReference>
<dbReference type="Proteomes" id="UP000001419">
    <property type="component" value="Chromosome"/>
</dbReference>
<dbReference type="GO" id="GO:0005737">
    <property type="term" value="C:cytoplasm"/>
    <property type="evidence" value="ECO:0007669"/>
    <property type="project" value="UniProtKB-SubCell"/>
</dbReference>
<dbReference type="GO" id="GO:0002189">
    <property type="term" value="C:ribose phosphate diphosphokinase complex"/>
    <property type="evidence" value="ECO:0007669"/>
    <property type="project" value="TreeGrafter"/>
</dbReference>
<dbReference type="GO" id="GO:0005524">
    <property type="term" value="F:ATP binding"/>
    <property type="evidence" value="ECO:0007669"/>
    <property type="project" value="UniProtKB-KW"/>
</dbReference>
<dbReference type="GO" id="GO:0016301">
    <property type="term" value="F:kinase activity"/>
    <property type="evidence" value="ECO:0007669"/>
    <property type="project" value="UniProtKB-KW"/>
</dbReference>
<dbReference type="GO" id="GO:0000287">
    <property type="term" value="F:magnesium ion binding"/>
    <property type="evidence" value="ECO:0007669"/>
    <property type="project" value="UniProtKB-UniRule"/>
</dbReference>
<dbReference type="GO" id="GO:0004749">
    <property type="term" value="F:ribose phosphate diphosphokinase activity"/>
    <property type="evidence" value="ECO:0007669"/>
    <property type="project" value="UniProtKB-UniRule"/>
</dbReference>
<dbReference type="GO" id="GO:0006015">
    <property type="term" value="P:5-phosphoribose 1-diphosphate biosynthetic process"/>
    <property type="evidence" value="ECO:0007669"/>
    <property type="project" value="UniProtKB-UniRule"/>
</dbReference>
<dbReference type="GO" id="GO:0006164">
    <property type="term" value="P:purine nucleotide biosynthetic process"/>
    <property type="evidence" value="ECO:0007669"/>
    <property type="project" value="TreeGrafter"/>
</dbReference>
<dbReference type="GO" id="GO:0009156">
    <property type="term" value="P:ribonucleoside monophosphate biosynthetic process"/>
    <property type="evidence" value="ECO:0007669"/>
    <property type="project" value="InterPro"/>
</dbReference>
<dbReference type="CDD" id="cd06223">
    <property type="entry name" value="PRTases_typeI"/>
    <property type="match status" value="1"/>
</dbReference>
<dbReference type="FunFam" id="3.40.50.2020:FF:000007">
    <property type="entry name" value="Ribose-phosphate pyrophosphokinase"/>
    <property type="match status" value="1"/>
</dbReference>
<dbReference type="Gene3D" id="3.40.50.2020">
    <property type="match status" value="2"/>
</dbReference>
<dbReference type="HAMAP" id="MF_00583_B">
    <property type="entry name" value="RibP_PPkinase_B"/>
    <property type="match status" value="1"/>
</dbReference>
<dbReference type="InterPro" id="IPR000842">
    <property type="entry name" value="PRib_PP_synth_CS"/>
</dbReference>
<dbReference type="InterPro" id="IPR029099">
    <property type="entry name" value="Pribosyltran_N"/>
</dbReference>
<dbReference type="InterPro" id="IPR000836">
    <property type="entry name" value="PRibTrfase_dom"/>
</dbReference>
<dbReference type="InterPro" id="IPR029057">
    <property type="entry name" value="PRTase-like"/>
</dbReference>
<dbReference type="InterPro" id="IPR005946">
    <property type="entry name" value="Rib-P_diPkinase"/>
</dbReference>
<dbReference type="InterPro" id="IPR037515">
    <property type="entry name" value="Rib-P_diPkinase_bac"/>
</dbReference>
<dbReference type="NCBIfam" id="NF002320">
    <property type="entry name" value="PRK01259.1"/>
    <property type="match status" value="1"/>
</dbReference>
<dbReference type="NCBIfam" id="NF002844">
    <property type="entry name" value="PRK03092.1"/>
    <property type="match status" value="1"/>
</dbReference>
<dbReference type="NCBIfam" id="TIGR01251">
    <property type="entry name" value="ribP_PPkin"/>
    <property type="match status" value="1"/>
</dbReference>
<dbReference type="PANTHER" id="PTHR10210">
    <property type="entry name" value="RIBOSE-PHOSPHATE DIPHOSPHOKINASE FAMILY MEMBER"/>
    <property type="match status" value="1"/>
</dbReference>
<dbReference type="PANTHER" id="PTHR10210:SF41">
    <property type="entry name" value="RIBOSE-PHOSPHATE PYROPHOSPHOKINASE 1, CHLOROPLASTIC"/>
    <property type="match status" value="1"/>
</dbReference>
<dbReference type="Pfam" id="PF14572">
    <property type="entry name" value="Pribosyl_synth"/>
    <property type="match status" value="1"/>
</dbReference>
<dbReference type="Pfam" id="PF13793">
    <property type="entry name" value="Pribosyltran_N"/>
    <property type="match status" value="1"/>
</dbReference>
<dbReference type="SMART" id="SM01400">
    <property type="entry name" value="Pribosyltran_N"/>
    <property type="match status" value="1"/>
</dbReference>
<dbReference type="SUPFAM" id="SSF53271">
    <property type="entry name" value="PRTase-like"/>
    <property type="match status" value="1"/>
</dbReference>
<dbReference type="PROSITE" id="PS00114">
    <property type="entry name" value="PRPP_SYNTHASE"/>
    <property type="match status" value="1"/>
</dbReference>
<protein>
    <recommendedName>
        <fullName evidence="1">Ribose-phosphate pyrophosphokinase</fullName>
        <shortName evidence="1">RPPK</shortName>
        <ecNumber evidence="1">2.7.6.1</ecNumber>
    </recommendedName>
    <alternativeName>
        <fullName evidence="1">5-phospho-D-ribosyl alpha-1-diphosphate synthase</fullName>
    </alternativeName>
    <alternativeName>
        <fullName evidence="1">Phosphoribosyl diphosphate synthase</fullName>
    </alternativeName>
    <alternativeName>
        <fullName evidence="1">Phosphoribosyl pyrophosphate synthase</fullName>
        <shortName evidence="1">P-Rib-PP synthase</shortName>
        <shortName evidence="1">PRPP synthase</shortName>
        <shortName evidence="1">PRPPase</shortName>
    </alternativeName>
</protein>
<gene>
    <name evidence="1" type="primary">prs</name>
    <name type="synonym">prsA</name>
    <name type="ordered locus">BQ2027_MB1045C</name>
</gene>
<sequence length="326" mass="35477">MSHDWTDNRKNLMLFAGRAHPELAEQVAKELDVHVTSQDAREFANGEIFVRFHESVRGCDAFVLQSCPAPVNRWLMEQLIMIDALKRGSAKRITAVMPFYPYARQDKKHRGREPISARLIADLLKTAGADRIVTVDLHTDQIQGFFDGPVDHMRGQNLLTGYIRDNYPDGNMVVVSPDSGRVRIAEKWADALGGVPLAFIHKTRDPRVPNQVVSNRVVGDVAGRTCVLIDDMIDTGGTIAGAVALLHNDGAGDVIIAATHGVLSDPAAQRLASCGAREVIVTNTLPIGEDKRFPQLTVLSIAPLLASTIRAVFENGSVTGLFDGDA</sequence>
<evidence type="ECO:0000255" key="1">
    <source>
        <dbReference type="HAMAP-Rule" id="MF_00583"/>
    </source>
</evidence>
<accession>P65233</accession>
<accession>A0A1R3XX57</accession>
<accession>P96383</accession>
<accession>X2BH02</accession>
<feature type="chain" id="PRO_0000141165" description="Ribose-phosphate pyrophosphokinase">
    <location>
        <begin position="1"/>
        <end position="326"/>
    </location>
</feature>
<feature type="active site" evidence="1">
    <location>
        <position position="202"/>
    </location>
</feature>
<feature type="binding site" evidence="1">
    <location>
        <begin position="45"/>
        <end position="47"/>
    </location>
    <ligand>
        <name>ATP</name>
        <dbReference type="ChEBI" id="CHEBI:30616"/>
    </ligand>
</feature>
<feature type="binding site" evidence="1">
    <location>
        <begin position="104"/>
        <end position="105"/>
    </location>
    <ligand>
        <name>ATP</name>
        <dbReference type="ChEBI" id="CHEBI:30616"/>
    </ligand>
</feature>
<feature type="binding site" evidence="1">
    <location>
        <position position="138"/>
    </location>
    <ligand>
        <name>Mg(2+)</name>
        <dbReference type="ChEBI" id="CHEBI:18420"/>
        <label>1</label>
    </ligand>
</feature>
<feature type="binding site" evidence="1">
    <location>
        <position position="178"/>
    </location>
    <ligand>
        <name>Mg(2+)</name>
        <dbReference type="ChEBI" id="CHEBI:18420"/>
        <label>2</label>
    </ligand>
</feature>
<feature type="binding site" evidence="1">
    <location>
        <position position="204"/>
    </location>
    <ligand>
        <name>D-ribose 5-phosphate</name>
        <dbReference type="ChEBI" id="CHEBI:78346"/>
    </ligand>
</feature>
<feature type="binding site" evidence="1">
    <location>
        <position position="230"/>
    </location>
    <ligand>
        <name>D-ribose 5-phosphate</name>
        <dbReference type="ChEBI" id="CHEBI:78346"/>
    </ligand>
</feature>
<feature type="binding site" evidence="1">
    <location>
        <begin position="234"/>
        <end position="238"/>
    </location>
    <ligand>
        <name>D-ribose 5-phosphate</name>
        <dbReference type="ChEBI" id="CHEBI:78346"/>
    </ligand>
</feature>
<comment type="function">
    <text evidence="1">Involved in the biosynthesis of the central metabolite phospho-alpha-D-ribosyl-1-pyrophosphate (PRPP) via the transfer of pyrophosphoryl group from ATP to 1-hydroxyl of ribose-5-phosphate (Rib-5-P).</text>
</comment>
<comment type="catalytic activity">
    <reaction evidence="1">
        <text>D-ribose 5-phosphate + ATP = 5-phospho-alpha-D-ribose 1-diphosphate + AMP + H(+)</text>
        <dbReference type="Rhea" id="RHEA:15609"/>
        <dbReference type="ChEBI" id="CHEBI:15378"/>
        <dbReference type="ChEBI" id="CHEBI:30616"/>
        <dbReference type="ChEBI" id="CHEBI:58017"/>
        <dbReference type="ChEBI" id="CHEBI:78346"/>
        <dbReference type="ChEBI" id="CHEBI:456215"/>
        <dbReference type="EC" id="2.7.6.1"/>
    </reaction>
</comment>
<comment type="cofactor">
    <cofactor evidence="1">
        <name>Mg(2+)</name>
        <dbReference type="ChEBI" id="CHEBI:18420"/>
    </cofactor>
    <text evidence="1">Binds 2 Mg(2+) ions per subunit.</text>
</comment>
<comment type="pathway">
    <text evidence="1">Metabolic intermediate biosynthesis; 5-phospho-alpha-D-ribose 1-diphosphate biosynthesis; 5-phospho-alpha-D-ribose 1-diphosphate from D-ribose 5-phosphate (route I): step 1/1.</text>
</comment>
<comment type="subunit">
    <text evidence="1">Homohexamer.</text>
</comment>
<comment type="subcellular location">
    <subcellularLocation>
        <location evidence="1">Cytoplasm</location>
    </subcellularLocation>
</comment>
<comment type="similarity">
    <text evidence="1">Belongs to the ribose-phosphate pyrophosphokinase family. Class I subfamily.</text>
</comment>
<keyword id="KW-0067">ATP-binding</keyword>
<keyword id="KW-0963">Cytoplasm</keyword>
<keyword id="KW-0418">Kinase</keyword>
<keyword id="KW-0460">Magnesium</keyword>
<keyword id="KW-0479">Metal-binding</keyword>
<keyword id="KW-0545">Nucleotide biosynthesis</keyword>
<keyword id="KW-0547">Nucleotide-binding</keyword>
<keyword id="KW-1185">Reference proteome</keyword>
<keyword id="KW-0808">Transferase</keyword>
<organism>
    <name type="scientific">Mycobacterium bovis (strain ATCC BAA-935 / AF2122/97)</name>
    <dbReference type="NCBI Taxonomy" id="233413"/>
    <lineage>
        <taxon>Bacteria</taxon>
        <taxon>Bacillati</taxon>
        <taxon>Actinomycetota</taxon>
        <taxon>Actinomycetes</taxon>
        <taxon>Mycobacteriales</taxon>
        <taxon>Mycobacteriaceae</taxon>
        <taxon>Mycobacterium</taxon>
        <taxon>Mycobacterium tuberculosis complex</taxon>
    </lineage>
</organism>